<accession>B0KTL0</accession>
<feature type="chain" id="PRO_0000374949" description="Ribosomal protein uS12 methylthiotransferase RimO">
    <location>
        <begin position="1"/>
        <end position="443"/>
    </location>
</feature>
<feature type="domain" description="MTTase N-terminal" evidence="1">
    <location>
        <begin position="8"/>
        <end position="118"/>
    </location>
</feature>
<feature type="domain" description="Radical SAM core" evidence="2">
    <location>
        <begin position="137"/>
        <end position="375"/>
    </location>
</feature>
<feature type="domain" description="TRAM" evidence="1">
    <location>
        <begin position="378"/>
        <end position="443"/>
    </location>
</feature>
<feature type="binding site" evidence="1">
    <location>
        <position position="17"/>
    </location>
    <ligand>
        <name>[4Fe-4S] cluster</name>
        <dbReference type="ChEBI" id="CHEBI:49883"/>
        <label>1</label>
    </ligand>
</feature>
<feature type="binding site" evidence="1">
    <location>
        <position position="53"/>
    </location>
    <ligand>
        <name>[4Fe-4S] cluster</name>
        <dbReference type="ChEBI" id="CHEBI:49883"/>
        <label>1</label>
    </ligand>
</feature>
<feature type="binding site" evidence="1">
    <location>
        <position position="82"/>
    </location>
    <ligand>
        <name>[4Fe-4S] cluster</name>
        <dbReference type="ChEBI" id="CHEBI:49883"/>
        <label>1</label>
    </ligand>
</feature>
<feature type="binding site" evidence="1">
    <location>
        <position position="151"/>
    </location>
    <ligand>
        <name>[4Fe-4S] cluster</name>
        <dbReference type="ChEBI" id="CHEBI:49883"/>
        <label>2</label>
        <note>4Fe-4S-S-AdoMet</note>
    </ligand>
</feature>
<feature type="binding site" evidence="1">
    <location>
        <position position="155"/>
    </location>
    <ligand>
        <name>[4Fe-4S] cluster</name>
        <dbReference type="ChEBI" id="CHEBI:49883"/>
        <label>2</label>
        <note>4Fe-4S-S-AdoMet</note>
    </ligand>
</feature>
<feature type="binding site" evidence="1">
    <location>
        <position position="158"/>
    </location>
    <ligand>
        <name>[4Fe-4S] cluster</name>
        <dbReference type="ChEBI" id="CHEBI:49883"/>
        <label>2</label>
        <note>4Fe-4S-S-AdoMet</note>
    </ligand>
</feature>
<name>RIMO_PSEPG</name>
<proteinExistence type="inferred from homology"/>
<keyword id="KW-0004">4Fe-4S</keyword>
<keyword id="KW-0963">Cytoplasm</keyword>
<keyword id="KW-0408">Iron</keyword>
<keyword id="KW-0411">Iron-sulfur</keyword>
<keyword id="KW-0479">Metal-binding</keyword>
<keyword id="KW-0949">S-adenosyl-L-methionine</keyword>
<keyword id="KW-0808">Transferase</keyword>
<comment type="function">
    <text evidence="1">Catalyzes the methylthiolation of an aspartic acid residue of ribosomal protein uS12.</text>
</comment>
<comment type="catalytic activity">
    <reaction evidence="1">
        <text>L-aspartate(89)-[ribosomal protein uS12]-hydrogen + (sulfur carrier)-SH + AH2 + 2 S-adenosyl-L-methionine = 3-methylsulfanyl-L-aspartate(89)-[ribosomal protein uS12]-hydrogen + (sulfur carrier)-H + 5'-deoxyadenosine + L-methionine + A + S-adenosyl-L-homocysteine + 2 H(+)</text>
        <dbReference type="Rhea" id="RHEA:37087"/>
        <dbReference type="Rhea" id="RHEA-COMP:10460"/>
        <dbReference type="Rhea" id="RHEA-COMP:10461"/>
        <dbReference type="Rhea" id="RHEA-COMP:14737"/>
        <dbReference type="Rhea" id="RHEA-COMP:14739"/>
        <dbReference type="ChEBI" id="CHEBI:13193"/>
        <dbReference type="ChEBI" id="CHEBI:15378"/>
        <dbReference type="ChEBI" id="CHEBI:17319"/>
        <dbReference type="ChEBI" id="CHEBI:17499"/>
        <dbReference type="ChEBI" id="CHEBI:29917"/>
        <dbReference type="ChEBI" id="CHEBI:29961"/>
        <dbReference type="ChEBI" id="CHEBI:57844"/>
        <dbReference type="ChEBI" id="CHEBI:57856"/>
        <dbReference type="ChEBI" id="CHEBI:59789"/>
        <dbReference type="ChEBI" id="CHEBI:64428"/>
        <dbReference type="ChEBI" id="CHEBI:73599"/>
        <dbReference type="EC" id="2.8.4.4"/>
    </reaction>
</comment>
<comment type="cofactor">
    <cofactor evidence="1">
        <name>[4Fe-4S] cluster</name>
        <dbReference type="ChEBI" id="CHEBI:49883"/>
    </cofactor>
    <text evidence="1">Binds 2 [4Fe-4S] clusters. One cluster is coordinated with 3 cysteines and an exchangeable S-adenosyl-L-methionine.</text>
</comment>
<comment type="subcellular location">
    <subcellularLocation>
        <location evidence="1">Cytoplasm</location>
    </subcellularLocation>
</comment>
<comment type="similarity">
    <text evidence="1">Belongs to the methylthiotransferase family. RimO subfamily.</text>
</comment>
<organism>
    <name type="scientific">Pseudomonas putida (strain GB-1)</name>
    <dbReference type="NCBI Taxonomy" id="76869"/>
    <lineage>
        <taxon>Bacteria</taxon>
        <taxon>Pseudomonadati</taxon>
        <taxon>Pseudomonadota</taxon>
        <taxon>Gammaproteobacteria</taxon>
        <taxon>Pseudomonadales</taxon>
        <taxon>Pseudomonadaceae</taxon>
        <taxon>Pseudomonas</taxon>
    </lineage>
</organism>
<evidence type="ECO:0000255" key="1">
    <source>
        <dbReference type="HAMAP-Rule" id="MF_01865"/>
    </source>
</evidence>
<evidence type="ECO:0000255" key="2">
    <source>
        <dbReference type="PROSITE-ProRule" id="PRU01266"/>
    </source>
</evidence>
<gene>
    <name evidence="1" type="primary">rimO</name>
    <name type="ordered locus">PputGB1_4219</name>
</gene>
<sequence length="443" mass="49464">MSTTPATPKVGFVSLGCPKALVDSERILTQLRMEGYEVVPTYEDADVVVVNTCGFIDSAKAESLEVIGEAIKENGKVIVTGCMGVEEGSIRDVHPSVLSVTGPQQYEQVVNAVHEVVPPRQDHNPLIDLVPPQGVKLTPRHYAYLKISEGCNHSCSFCIIPSMRGKLVSRPVGEVLSEAERLVKAGVKEILVISQDTSAYGVDVKYKTDFWNGRPVKTRMLELCEALSSLGAWVRLHYVYPYPNVDDVIPLMAAGKILPYLDIPFQHASPKVLKSMKRPAFEDRTLARIKNWREQCPELVIRSTFIVGFPGETEEDFQYLLDWLTEAQLDRVGCFQYSPVEGAPANDLGLEEVPDDIKQERWDRFMAHQQAISTARLQLRIGKEIEVLIDEVEEQGSVGRSFFDAPEIDGNVFIDGDHGFKPGDKVRCRVVDADEYDMWAEPI</sequence>
<protein>
    <recommendedName>
        <fullName evidence="1">Ribosomal protein uS12 methylthiotransferase RimO</fullName>
        <shortName evidence="1">uS12 MTTase</shortName>
        <shortName evidence="1">uS12 methylthiotransferase</shortName>
        <ecNumber evidence="1">2.8.4.4</ecNumber>
    </recommendedName>
    <alternativeName>
        <fullName evidence="1">Ribosomal protein uS12 (aspartate-C(3))-methylthiotransferase</fullName>
    </alternativeName>
    <alternativeName>
        <fullName evidence="1">Ribosome maturation factor RimO</fullName>
    </alternativeName>
</protein>
<dbReference type="EC" id="2.8.4.4" evidence="1"/>
<dbReference type="EMBL" id="CP000926">
    <property type="protein sequence ID" value="ABZ00108.1"/>
    <property type="molecule type" value="Genomic_DNA"/>
</dbReference>
<dbReference type="RefSeq" id="WP_012273784.1">
    <property type="nucleotide sequence ID" value="NC_010322.1"/>
</dbReference>
<dbReference type="SMR" id="B0KTL0"/>
<dbReference type="KEGG" id="ppg:PputGB1_4219"/>
<dbReference type="eggNOG" id="COG0621">
    <property type="taxonomic scope" value="Bacteria"/>
</dbReference>
<dbReference type="HOGENOM" id="CLU_018697_0_0_6"/>
<dbReference type="Proteomes" id="UP000002157">
    <property type="component" value="Chromosome"/>
</dbReference>
<dbReference type="GO" id="GO:0005829">
    <property type="term" value="C:cytosol"/>
    <property type="evidence" value="ECO:0007669"/>
    <property type="project" value="TreeGrafter"/>
</dbReference>
<dbReference type="GO" id="GO:0051539">
    <property type="term" value="F:4 iron, 4 sulfur cluster binding"/>
    <property type="evidence" value="ECO:0007669"/>
    <property type="project" value="UniProtKB-UniRule"/>
</dbReference>
<dbReference type="GO" id="GO:0035599">
    <property type="term" value="F:aspartic acid methylthiotransferase activity"/>
    <property type="evidence" value="ECO:0007669"/>
    <property type="project" value="TreeGrafter"/>
</dbReference>
<dbReference type="GO" id="GO:0046872">
    <property type="term" value="F:metal ion binding"/>
    <property type="evidence" value="ECO:0007669"/>
    <property type="project" value="UniProtKB-KW"/>
</dbReference>
<dbReference type="GO" id="GO:0103039">
    <property type="term" value="F:protein methylthiotransferase activity"/>
    <property type="evidence" value="ECO:0007669"/>
    <property type="project" value="UniProtKB-EC"/>
</dbReference>
<dbReference type="GO" id="GO:0006400">
    <property type="term" value="P:tRNA modification"/>
    <property type="evidence" value="ECO:0007669"/>
    <property type="project" value="InterPro"/>
</dbReference>
<dbReference type="CDD" id="cd01335">
    <property type="entry name" value="Radical_SAM"/>
    <property type="match status" value="1"/>
</dbReference>
<dbReference type="FunFam" id="2.40.50.140:FF:000060">
    <property type="entry name" value="Ribosomal protein S12 methylthiotransferase RimO"/>
    <property type="match status" value="1"/>
</dbReference>
<dbReference type="FunFam" id="3.40.50.12160:FF:000002">
    <property type="entry name" value="Ribosomal protein S12 methylthiotransferase RimO"/>
    <property type="match status" value="1"/>
</dbReference>
<dbReference type="FunFam" id="3.80.30.20:FF:000001">
    <property type="entry name" value="tRNA-2-methylthio-N(6)-dimethylallyladenosine synthase 2"/>
    <property type="match status" value="1"/>
</dbReference>
<dbReference type="Gene3D" id="3.40.50.12160">
    <property type="entry name" value="Methylthiotransferase, N-terminal domain"/>
    <property type="match status" value="1"/>
</dbReference>
<dbReference type="Gene3D" id="2.40.50.140">
    <property type="entry name" value="Nucleic acid-binding proteins"/>
    <property type="match status" value="1"/>
</dbReference>
<dbReference type="Gene3D" id="3.80.30.20">
    <property type="entry name" value="tm_1862 like domain"/>
    <property type="match status" value="1"/>
</dbReference>
<dbReference type="HAMAP" id="MF_01865">
    <property type="entry name" value="MTTase_RimO"/>
    <property type="match status" value="1"/>
</dbReference>
<dbReference type="InterPro" id="IPR006638">
    <property type="entry name" value="Elp3/MiaA/NifB-like_rSAM"/>
</dbReference>
<dbReference type="InterPro" id="IPR005839">
    <property type="entry name" value="Methylthiotransferase"/>
</dbReference>
<dbReference type="InterPro" id="IPR020612">
    <property type="entry name" value="Methylthiotransferase_CS"/>
</dbReference>
<dbReference type="InterPro" id="IPR013848">
    <property type="entry name" value="Methylthiotransferase_N"/>
</dbReference>
<dbReference type="InterPro" id="IPR038135">
    <property type="entry name" value="Methylthiotransferase_N_sf"/>
</dbReference>
<dbReference type="InterPro" id="IPR012340">
    <property type="entry name" value="NA-bd_OB-fold"/>
</dbReference>
<dbReference type="InterPro" id="IPR005840">
    <property type="entry name" value="Ribosomal_uS12_MeSTrfase_RimO"/>
</dbReference>
<dbReference type="InterPro" id="IPR007197">
    <property type="entry name" value="rSAM"/>
</dbReference>
<dbReference type="InterPro" id="IPR023404">
    <property type="entry name" value="rSAM_horseshoe"/>
</dbReference>
<dbReference type="InterPro" id="IPR002792">
    <property type="entry name" value="TRAM_dom"/>
</dbReference>
<dbReference type="NCBIfam" id="TIGR01125">
    <property type="entry name" value="30S ribosomal protein S12 methylthiotransferase RimO"/>
    <property type="match status" value="1"/>
</dbReference>
<dbReference type="NCBIfam" id="TIGR00089">
    <property type="entry name" value="MiaB/RimO family radical SAM methylthiotransferase"/>
    <property type="match status" value="1"/>
</dbReference>
<dbReference type="PANTHER" id="PTHR43837">
    <property type="entry name" value="RIBOSOMAL PROTEIN S12 METHYLTHIOTRANSFERASE RIMO"/>
    <property type="match status" value="1"/>
</dbReference>
<dbReference type="PANTHER" id="PTHR43837:SF1">
    <property type="entry name" value="RIBOSOMAL PROTEIN US12 METHYLTHIOTRANSFERASE RIMO"/>
    <property type="match status" value="1"/>
</dbReference>
<dbReference type="Pfam" id="PF04055">
    <property type="entry name" value="Radical_SAM"/>
    <property type="match status" value="1"/>
</dbReference>
<dbReference type="Pfam" id="PF18693">
    <property type="entry name" value="TRAM_2"/>
    <property type="match status" value="1"/>
</dbReference>
<dbReference type="Pfam" id="PF00919">
    <property type="entry name" value="UPF0004"/>
    <property type="match status" value="1"/>
</dbReference>
<dbReference type="SFLD" id="SFLDG01082">
    <property type="entry name" value="B12-binding_domain_containing"/>
    <property type="match status" value="1"/>
</dbReference>
<dbReference type="SFLD" id="SFLDS00029">
    <property type="entry name" value="Radical_SAM"/>
    <property type="match status" value="1"/>
</dbReference>
<dbReference type="SFLD" id="SFLDF00274">
    <property type="entry name" value="ribosomal_protein_S12_methylth"/>
    <property type="match status" value="1"/>
</dbReference>
<dbReference type="SMART" id="SM00729">
    <property type="entry name" value="Elp3"/>
    <property type="match status" value="1"/>
</dbReference>
<dbReference type="SUPFAM" id="SSF102114">
    <property type="entry name" value="Radical SAM enzymes"/>
    <property type="match status" value="1"/>
</dbReference>
<dbReference type="PROSITE" id="PS51449">
    <property type="entry name" value="MTTASE_N"/>
    <property type="match status" value="1"/>
</dbReference>
<dbReference type="PROSITE" id="PS01278">
    <property type="entry name" value="MTTASE_RADICAL"/>
    <property type="match status" value="1"/>
</dbReference>
<dbReference type="PROSITE" id="PS51918">
    <property type="entry name" value="RADICAL_SAM"/>
    <property type="match status" value="1"/>
</dbReference>
<dbReference type="PROSITE" id="PS50926">
    <property type="entry name" value="TRAM"/>
    <property type="match status" value="1"/>
</dbReference>
<reference key="1">
    <citation type="submission" date="2008-01" db="EMBL/GenBank/DDBJ databases">
        <title>Complete sequence of Pseudomonas putida GB-1.</title>
        <authorList>
            <consortium name="US DOE Joint Genome Institute"/>
            <person name="Copeland A."/>
            <person name="Lucas S."/>
            <person name="Lapidus A."/>
            <person name="Barry K."/>
            <person name="Glavina del Rio T."/>
            <person name="Dalin E."/>
            <person name="Tice H."/>
            <person name="Pitluck S."/>
            <person name="Bruce D."/>
            <person name="Goodwin L."/>
            <person name="Chertkov O."/>
            <person name="Brettin T."/>
            <person name="Detter J.C."/>
            <person name="Han C."/>
            <person name="Kuske C.R."/>
            <person name="Schmutz J."/>
            <person name="Larimer F."/>
            <person name="Land M."/>
            <person name="Hauser L."/>
            <person name="Kyrpides N."/>
            <person name="Kim E."/>
            <person name="McCarthy J.K."/>
            <person name="Richardson P."/>
        </authorList>
    </citation>
    <scope>NUCLEOTIDE SEQUENCE [LARGE SCALE GENOMIC DNA]</scope>
    <source>
        <strain>GB-1</strain>
    </source>
</reference>